<sequence>MRRGKSIVLSLLLWHFPVWAACPDWSPARANDEIARLQQQLAQWNDSYWQQGVSAVDDSVYDQLSAQLVQWQRCFGGDTGAELAPPVSGSLPHPVPHTGVRKLADKQAVQQWMRKRSDLWVQPKVDGVAVTLVYRDGRLVSAISRGNGLKGEDWTQKVRLIPAVPQSTKGALANSTLQGEIFLLHDNHIQRQMGGMNARSKVAGMMMRQNNTSSLQSLSVFIWAWPDGPATMPERLRQLSGAGFGFAQQYSQPVKSADDVERVRTAWWTTGLPFVTDGVVVRTGKEPEARHWMPGQGDWLVAWKYPPVAKVAEVTGVQFAVGKSGKISVVASLAPVMLDDKRVKRVNVGSVRRWEEWDIAPGDHILVSLAGQGIPRIDKVVWRSTQRDKPAPPGNRYNALTCFYATEVCQEQFIARLVWLGSKEALEVDGMGEAGWRVLHQAHRFEHIFSWLALTQEQLQATPGFSKEKSKQLWHQFNLVRHRPFIRWVMAMGIPLTQGALKANGDRSWGQLLARTAEYWQQLPTTGEGRARRVIQWRDNPEIRALGNWLAARHINGFSP</sequence>
<protein>
    <recommendedName>
        <fullName evidence="1">DNA ligase B</fullName>
        <ecNumber evidence="1">6.5.1.2</ecNumber>
    </recommendedName>
    <alternativeName>
        <fullName evidence="1">Polydeoxyribonucleotide synthase [NAD(+)] B</fullName>
    </alternativeName>
</protein>
<feature type="chain" id="PRO_0000313534" description="DNA ligase B">
    <location>
        <begin position="1"/>
        <end position="560"/>
    </location>
</feature>
<feature type="active site" description="N6-AMP-lysine intermediate" evidence="1">
    <location>
        <position position="124"/>
    </location>
</feature>
<evidence type="ECO:0000255" key="1">
    <source>
        <dbReference type="HAMAP-Rule" id="MF_01587"/>
    </source>
</evidence>
<evidence type="ECO:0000305" key="2"/>
<name>LIGB_CITK8</name>
<gene>
    <name evidence="1" type="primary">ligB</name>
    <name type="ordered locus">CKO_05104</name>
</gene>
<keyword id="KW-0227">DNA damage</keyword>
<keyword id="KW-0234">DNA repair</keyword>
<keyword id="KW-0235">DNA replication</keyword>
<keyword id="KW-0436">Ligase</keyword>
<keyword id="KW-0520">NAD</keyword>
<keyword id="KW-1185">Reference proteome</keyword>
<dbReference type="EC" id="6.5.1.2" evidence="1"/>
<dbReference type="EMBL" id="CP000822">
    <property type="protein sequence ID" value="ABV16147.1"/>
    <property type="status" value="ALT_INIT"/>
    <property type="molecule type" value="Genomic_DNA"/>
</dbReference>
<dbReference type="RefSeq" id="WP_024131064.1">
    <property type="nucleotide sequence ID" value="NC_009792.1"/>
</dbReference>
<dbReference type="SMR" id="A8ARN4"/>
<dbReference type="STRING" id="290338.CKO_05104"/>
<dbReference type="GeneID" id="45138556"/>
<dbReference type="KEGG" id="cko:CKO_05104"/>
<dbReference type="HOGENOM" id="CLU_489786_0_0_6"/>
<dbReference type="OrthoDB" id="9759736at2"/>
<dbReference type="Proteomes" id="UP000008148">
    <property type="component" value="Chromosome"/>
</dbReference>
<dbReference type="GO" id="GO:0003911">
    <property type="term" value="F:DNA ligase (NAD+) activity"/>
    <property type="evidence" value="ECO:0007669"/>
    <property type="project" value="UniProtKB-UniRule"/>
</dbReference>
<dbReference type="GO" id="GO:0006281">
    <property type="term" value="P:DNA repair"/>
    <property type="evidence" value="ECO:0007669"/>
    <property type="project" value="UniProtKB-KW"/>
</dbReference>
<dbReference type="GO" id="GO:0006260">
    <property type="term" value="P:DNA replication"/>
    <property type="evidence" value="ECO:0007669"/>
    <property type="project" value="UniProtKB-KW"/>
</dbReference>
<dbReference type="FunFam" id="1.10.287.610:FF:000003">
    <property type="entry name" value="DNA ligase B"/>
    <property type="match status" value="1"/>
</dbReference>
<dbReference type="FunFam" id="2.40.50.140:FF:000139">
    <property type="entry name" value="DNA ligase B"/>
    <property type="match status" value="1"/>
</dbReference>
<dbReference type="FunFam" id="3.30.470.30:FF:000007">
    <property type="entry name" value="DNA ligase B"/>
    <property type="match status" value="1"/>
</dbReference>
<dbReference type="Gene3D" id="1.10.150.20">
    <property type="entry name" value="5' to 3' exonuclease, C-terminal subdomain"/>
    <property type="match status" value="1"/>
</dbReference>
<dbReference type="Gene3D" id="3.30.470.30">
    <property type="entry name" value="DNA ligase/mRNA capping enzyme"/>
    <property type="match status" value="1"/>
</dbReference>
<dbReference type="Gene3D" id="1.10.287.610">
    <property type="entry name" value="Helix hairpin bin"/>
    <property type="match status" value="1"/>
</dbReference>
<dbReference type="Gene3D" id="2.40.50.140">
    <property type="entry name" value="Nucleic acid-binding proteins"/>
    <property type="match status" value="1"/>
</dbReference>
<dbReference type="HAMAP" id="MF_01587">
    <property type="entry name" value="DNA_ligase_B"/>
    <property type="match status" value="1"/>
</dbReference>
<dbReference type="InterPro" id="IPR018239">
    <property type="entry name" value="DNA_ligase_AS"/>
</dbReference>
<dbReference type="InterPro" id="IPR020923">
    <property type="entry name" value="DNA_ligase_B"/>
</dbReference>
<dbReference type="InterPro" id="IPR033136">
    <property type="entry name" value="DNA_ligase_CS"/>
</dbReference>
<dbReference type="InterPro" id="IPR013839">
    <property type="entry name" value="DNAligase_adenylation"/>
</dbReference>
<dbReference type="InterPro" id="IPR013840">
    <property type="entry name" value="DNAligase_N"/>
</dbReference>
<dbReference type="InterPro" id="IPR012340">
    <property type="entry name" value="NA-bd_OB-fold"/>
</dbReference>
<dbReference type="InterPro" id="IPR050326">
    <property type="entry name" value="NAD_dep_DNA_ligaseB"/>
</dbReference>
<dbReference type="InterPro" id="IPR004150">
    <property type="entry name" value="NAD_DNA_ligase_OB"/>
</dbReference>
<dbReference type="InterPro" id="IPR010994">
    <property type="entry name" value="RuvA_2-like"/>
</dbReference>
<dbReference type="NCBIfam" id="NF005987">
    <property type="entry name" value="PRK08097.1"/>
    <property type="match status" value="1"/>
</dbReference>
<dbReference type="PANTHER" id="PTHR47810">
    <property type="entry name" value="DNA LIGASE"/>
    <property type="match status" value="1"/>
</dbReference>
<dbReference type="PANTHER" id="PTHR47810:SF1">
    <property type="entry name" value="DNA LIGASE B"/>
    <property type="match status" value="1"/>
</dbReference>
<dbReference type="Pfam" id="PF01653">
    <property type="entry name" value="DNA_ligase_aden"/>
    <property type="match status" value="1"/>
</dbReference>
<dbReference type="Pfam" id="PF03120">
    <property type="entry name" value="DNA_ligase_OB"/>
    <property type="match status" value="1"/>
</dbReference>
<dbReference type="SMART" id="SM00532">
    <property type="entry name" value="LIGANc"/>
    <property type="match status" value="1"/>
</dbReference>
<dbReference type="SUPFAM" id="SSF56091">
    <property type="entry name" value="DNA ligase/mRNA capping enzyme, catalytic domain"/>
    <property type="match status" value="1"/>
</dbReference>
<dbReference type="SUPFAM" id="SSF50249">
    <property type="entry name" value="Nucleic acid-binding proteins"/>
    <property type="match status" value="1"/>
</dbReference>
<dbReference type="SUPFAM" id="SSF47781">
    <property type="entry name" value="RuvA domain 2-like"/>
    <property type="match status" value="1"/>
</dbReference>
<dbReference type="PROSITE" id="PS01055">
    <property type="entry name" value="DNA_LIGASE_N1"/>
    <property type="match status" value="1"/>
</dbReference>
<dbReference type="PROSITE" id="PS01056">
    <property type="entry name" value="DNA_LIGASE_N2"/>
    <property type="match status" value="1"/>
</dbReference>
<organism>
    <name type="scientific">Citrobacter koseri (strain ATCC BAA-895 / CDC 4225-83 / SGSC4696)</name>
    <dbReference type="NCBI Taxonomy" id="290338"/>
    <lineage>
        <taxon>Bacteria</taxon>
        <taxon>Pseudomonadati</taxon>
        <taxon>Pseudomonadota</taxon>
        <taxon>Gammaproteobacteria</taxon>
        <taxon>Enterobacterales</taxon>
        <taxon>Enterobacteriaceae</taxon>
        <taxon>Citrobacter</taxon>
    </lineage>
</organism>
<accession>A8ARN4</accession>
<comment type="function">
    <text evidence="1">Catalyzes the formation of phosphodiester linkages between 5'-phosphoryl and 3'-hydroxyl groups in double-stranded DNA using NAD as a coenzyme and as the energy source for the reaction.</text>
</comment>
<comment type="catalytic activity">
    <reaction evidence="1">
        <text>NAD(+) + (deoxyribonucleotide)n-3'-hydroxyl + 5'-phospho-(deoxyribonucleotide)m = (deoxyribonucleotide)n+m + AMP + beta-nicotinamide D-nucleotide.</text>
        <dbReference type="EC" id="6.5.1.2"/>
    </reaction>
</comment>
<comment type="similarity">
    <text evidence="1">Belongs to the NAD-dependent DNA ligase family. LigB subfamily.</text>
</comment>
<comment type="sequence caution" evidence="2">
    <conflict type="erroneous initiation">
        <sequence resource="EMBL-CDS" id="ABV16147"/>
    </conflict>
</comment>
<proteinExistence type="inferred from homology"/>
<reference key="1">
    <citation type="submission" date="2007-08" db="EMBL/GenBank/DDBJ databases">
        <authorList>
            <consortium name="The Citrobacter koseri Genome Sequencing Project"/>
            <person name="McClelland M."/>
            <person name="Sanderson E.K."/>
            <person name="Porwollik S."/>
            <person name="Spieth J."/>
            <person name="Clifton W.S."/>
            <person name="Latreille P."/>
            <person name="Courtney L."/>
            <person name="Wang C."/>
            <person name="Pepin K."/>
            <person name="Bhonagiri V."/>
            <person name="Nash W."/>
            <person name="Johnson M."/>
            <person name="Thiruvilangam P."/>
            <person name="Wilson R."/>
        </authorList>
    </citation>
    <scope>NUCLEOTIDE SEQUENCE [LARGE SCALE GENOMIC DNA]</scope>
    <source>
        <strain>ATCC BAA-895 / CDC 4225-83 / SGSC4696</strain>
    </source>
</reference>